<name>TRPD_SYMTH</name>
<reference key="1">
    <citation type="journal article" date="2004" name="Nucleic Acids Res.">
        <title>Genome sequence of Symbiobacterium thermophilum, an uncultivable bacterium that depends on microbial commensalism.</title>
        <authorList>
            <person name="Ueda K."/>
            <person name="Yamashita A."/>
            <person name="Ishikawa J."/>
            <person name="Shimada M."/>
            <person name="Watsuji T."/>
            <person name="Morimura K."/>
            <person name="Ikeda H."/>
            <person name="Hattori M."/>
            <person name="Beppu T."/>
        </authorList>
    </citation>
    <scope>NUCLEOTIDE SEQUENCE [LARGE SCALE GENOMIC DNA]</scope>
    <source>
        <strain>DSM 24528 / JCM 14929 / IAM 14863 / T</strain>
    </source>
</reference>
<feature type="chain" id="PRO_0000227192" description="Anthranilate phosphoribosyltransferase">
    <location>
        <begin position="1"/>
        <end position="341"/>
    </location>
</feature>
<feature type="binding site" evidence="1">
    <location>
        <position position="79"/>
    </location>
    <ligand>
        <name>5-phospho-alpha-D-ribose 1-diphosphate</name>
        <dbReference type="ChEBI" id="CHEBI:58017"/>
    </ligand>
</feature>
<feature type="binding site" evidence="1">
    <location>
        <position position="79"/>
    </location>
    <ligand>
        <name>anthranilate</name>
        <dbReference type="ChEBI" id="CHEBI:16567"/>
        <label>1</label>
    </ligand>
</feature>
<feature type="binding site" evidence="1">
    <location>
        <begin position="82"/>
        <end position="83"/>
    </location>
    <ligand>
        <name>5-phospho-alpha-D-ribose 1-diphosphate</name>
        <dbReference type="ChEBI" id="CHEBI:58017"/>
    </ligand>
</feature>
<feature type="binding site" evidence="1">
    <location>
        <position position="87"/>
    </location>
    <ligand>
        <name>5-phospho-alpha-D-ribose 1-diphosphate</name>
        <dbReference type="ChEBI" id="CHEBI:58017"/>
    </ligand>
</feature>
<feature type="binding site" evidence="1">
    <location>
        <begin position="89"/>
        <end position="92"/>
    </location>
    <ligand>
        <name>5-phospho-alpha-D-ribose 1-diphosphate</name>
        <dbReference type="ChEBI" id="CHEBI:58017"/>
    </ligand>
</feature>
<feature type="binding site" evidence="1">
    <location>
        <position position="91"/>
    </location>
    <ligand>
        <name>Mg(2+)</name>
        <dbReference type="ChEBI" id="CHEBI:18420"/>
        <label>1</label>
    </ligand>
</feature>
<feature type="binding site" evidence="1">
    <location>
        <begin position="107"/>
        <end position="115"/>
    </location>
    <ligand>
        <name>5-phospho-alpha-D-ribose 1-diphosphate</name>
        <dbReference type="ChEBI" id="CHEBI:58017"/>
    </ligand>
</feature>
<feature type="binding site" evidence="1">
    <location>
        <position position="110"/>
    </location>
    <ligand>
        <name>anthranilate</name>
        <dbReference type="ChEBI" id="CHEBI:16567"/>
        <label>1</label>
    </ligand>
</feature>
<feature type="binding site" evidence="1">
    <location>
        <position position="119"/>
    </location>
    <ligand>
        <name>5-phospho-alpha-D-ribose 1-diphosphate</name>
        <dbReference type="ChEBI" id="CHEBI:58017"/>
    </ligand>
</feature>
<feature type="binding site" evidence="1">
    <location>
        <position position="165"/>
    </location>
    <ligand>
        <name>anthranilate</name>
        <dbReference type="ChEBI" id="CHEBI:16567"/>
        <label>2</label>
    </ligand>
</feature>
<feature type="binding site" evidence="1">
    <location>
        <position position="224"/>
    </location>
    <ligand>
        <name>Mg(2+)</name>
        <dbReference type="ChEBI" id="CHEBI:18420"/>
        <label>2</label>
    </ligand>
</feature>
<feature type="binding site" evidence="1">
    <location>
        <position position="225"/>
    </location>
    <ligand>
        <name>Mg(2+)</name>
        <dbReference type="ChEBI" id="CHEBI:18420"/>
        <label>1</label>
    </ligand>
</feature>
<feature type="binding site" evidence="1">
    <location>
        <position position="225"/>
    </location>
    <ligand>
        <name>Mg(2+)</name>
        <dbReference type="ChEBI" id="CHEBI:18420"/>
        <label>2</label>
    </ligand>
</feature>
<accession>Q67PJ9</accession>
<organism>
    <name type="scientific">Symbiobacterium thermophilum (strain DSM 24528 / JCM 14929 / IAM 14863 / T)</name>
    <dbReference type="NCBI Taxonomy" id="292459"/>
    <lineage>
        <taxon>Bacteria</taxon>
        <taxon>Bacillati</taxon>
        <taxon>Bacillota</taxon>
        <taxon>Clostridia</taxon>
        <taxon>Eubacteriales</taxon>
        <taxon>Symbiobacteriaceae</taxon>
        <taxon>Symbiobacterium</taxon>
    </lineage>
</organism>
<proteinExistence type="inferred from homology"/>
<dbReference type="EC" id="2.4.2.18" evidence="1"/>
<dbReference type="EMBL" id="AP006840">
    <property type="protein sequence ID" value="BAD40394.1"/>
    <property type="molecule type" value="Genomic_DNA"/>
</dbReference>
<dbReference type="RefSeq" id="WP_011195539.1">
    <property type="nucleotide sequence ID" value="NC_006177.1"/>
</dbReference>
<dbReference type="SMR" id="Q67PJ9"/>
<dbReference type="STRING" id="292459.STH1409"/>
<dbReference type="KEGG" id="sth:STH1409"/>
<dbReference type="eggNOG" id="COG0547">
    <property type="taxonomic scope" value="Bacteria"/>
</dbReference>
<dbReference type="HOGENOM" id="CLU_034315_2_1_9"/>
<dbReference type="OrthoDB" id="9806430at2"/>
<dbReference type="UniPathway" id="UPA00035">
    <property type="reaction ID" value="UER00041"/>
</dbReference>
<dbReference type="Proteomes" id="UP000000417">
    <property type="component" value="Chromosome"/>
</dbReference>
<dbReference type="GO" id="GO:0005829">
    <property type="term" value="C:cytosol"/>
    <property type="evidence" value="ECO:0007669"/>
    <property type="project" value="TreeGrafter"/>
</dbReference>
<dbReference type="GO" id="GO:0004048">
    <property type="term" value="F:anthranilate phosphoribosyltransferase activity"/>
    <property type="evidence" value="ECO:0007669"/>
    <property type="project" value="UniProtKB-UniRule"/>
</dbReference>
<dbReference type="GO" id="GO:0000287">
    <property type="term" value="F:magnesium ion binding"/>
    <property type="evidence" value="ECO:0007669"/>
    <property type="project" value="UniProtKB-UniRule"/>
</dbReference>
<dbReference type="GO" id="GO:0000162">
    <property type="term" value="P:L-tryptophan biosynthetic process"/>
    <property type="evidence" value="ECO:0007669"/>
    <property type="project" value="UniProtKB-UniRule"/>
</dbReference>
<dbReference type="FunFam" id="3.40.1030.10:FF:000002">
    <property type="entry name" value="Anthranilate phosphoribosyltransferase"/>
    <property type="match status" value="1"/>
</dbReference>
<dbReference type="Gene3D" id="3.40.1030.10">
    <property type="entry name" value="Nucleoside phosphorylase/phosphoribosyltransferase catalytic domain"/>
    <property type="match status" value="1"/>
</dbReference>
<dbReference type="Gene3D" id="1.20.970.10">
    <property type="entry name" value="Transferase, Pyrimidine Nucleoside Phosphorylase, Chain C"/>
    <property type="match status" value="1"/>
</dbReference>
<dbReference type="HAMAP" id="MF_00211">
    <property type="entry name" value="TrpD"/>
    <property type="match status" value="1"/>
</dbReference>
<dbReference type="InterPro" id="IPR005940">
    <property type="entry name" value="Anthranilate_Pribosyl_Tfrase"/>
</dbReference>
<dbReference type="InterPro" id="IPR000312">
    <property type="entry name" value="Glycosyl_Trfase_fam3"/>
</dbReference>
<dbReference type="InterPro" id="IPR017459">
    <property type="entry name" value="Glycosyl_Trfase_fam3_N_dom"/>
</dbReference>
<dbReference type="InterPro" id="IPR036320">
    <property type="entry name" value="Glycosyl_Trfase_fam3_N_dom_sf"/>
</dbReference>
<dbReference type="InterPro" id="IPR035902">
    <property type="entry name" value="Nuc_phospho_transferase"/>
</dbReference>
<dbReference type="NCBIfam" id="TIGR01245">
    <property type="entry name" value="trpD"/>
    <property type="match status" value="1"/>
</dbReference>
<dbReference type="PANTHER" id="PTHR43285">
    <property type="entry name" value="ANTHRANILATE PHOSPHORIBOSYLTRANSFERASE"/>
    <property type="match status" value="1"/>
</dbReference>
<dbReference type="PANTHER" id="PTHR43285:SF2">
    <property type="entry name" value="ANTHRANILATE PHOSPHORIBOSYLTRANSFERASE"/>
    <property type="match status" value="1"/>
</dbReference>
<dbReference type="Pfam" id="PF02885">
    <property type="entry name" value="Glycos_trans_3N"/>
    <property type="match status" value="1"/>
</dbReference>
<dbReference type="Pfam" id="PF00591">
    <property type="entry name" value="Glycos_transf_3"/>
    <property type="match status" value="1"/>
</dbReference>
<dbReference type="SUPFAM" id="SSF52418">
    <property type="entry name" value="Nucleoside phosphorylase/phosphoribosyltransferase catalytic domain"/>
    <property type="match status" value="1"/>
</dbReference>
<dbReference type="SUPFAM" id="SSF47648">
    <property type="entry name" value="Nucleoside phosphorylase/phosphoribosyltransferase N-terminal domain"/>
    <property type="match status" value="1"/>
</dbReference>
<gene>
    <name evidence="1" type="primary">trpD</name>
    <name type="ordered locus">STH1409</name>
</gene>
<comment type="function">
    <text evidence="1">Catalyzes the transfer of the phosphoribosyl group of 5-phosphorylribose-1-pyrophosphate (PRPP) to anthranilate to yield N-(5'-phosphoribosyl)-anthranilate (PRA).</text>
</comment>
<comment type="catalytic activity">
    <reaction evidence="1">
        <text>N-(5-phospho-beta-D-ribosyl)anthranilate + diphosphate = 5-phospho-alpha-D-ribose 1-diphosphate + anthranilate</text>
        <dbReference type="Rhea" id="RHEA:11768"/>
        <dbReference type="ChEBI" id="CHEBI:16567"/>
        <dbReference type="ChEBI" id="CHEBI:18277"/>
        <dbReference type="ChEBI" id="CHEBI:33019"/>
        <dbReference type="ChEBI" id="CHEBI:58017"/>
        <dbReference type="EC" id="2.4.2.18"/>
    </reaction>
</comment>
<comment type="cofactor">
    <cofactor evidence="1">
        <name>Mg(2+)</name>
        <dbReference type="ChEBI" id="CHEBI:18420"/>
    </cofactor>
    <text evidence="1">Binds 2 magnesium ions per monomer.</text>
</comment>
<comment type="pathway">
    <text evidence="1">Amino-acid biosynthesis; L-tryptophan biosynthesis; L-tryptophan from chorismate: step 2/5.</text>
</comment>
<comment type="subunit">
    <text evidence="1">Homodimer.</text>
</comment>
<comment type="similarity">
    <text evidence="1">Belongs to the anthranilate phosphoribosyltransferase family.</text>
</comment>
<protein>
    <recommendedName>
        <fullName evidence="1">Anthranilate phosphoribosyltransferase</fullName>
        <ecNumber evidence="1">2.4.2.18</ecNumber>
    </recommendedName>
</protein>
<keyword id="KW-0028">Amino-acid biosynthesis</keyword>
<keyword id="KW-0057">Aromatic amino acid biosynthesis</keyword>
<keyword id="KW-0328">Glycosyltransferase</keyword>
<keyword id="KW-0460">Magnesium</keyword>
<keyword id="KW-0479">Metal-binding</keyword>
<keyword id="KW-1185">Reference proteome</keyword>
<keyword id="KW-0808">Transferase</keyword>
<keyword id="KW-0822">Tryptophan biosynthesis</keyword>
<sequence>MKALLRQVAEGKDLTEAQAEAAMTLMMTGEATPAQVAAFLMALRIKGETVAEITGAARVMRERAIRIHHSRPLVVDTCGTGGDGSHTFNISTTAAFVVAGAGVAVAKHGNRAATSLTGSADVLEALGIHLDLTPEEVGRCIDEVGIGFLYAPALHTSMKHVAPVRREIGLRNIFNLLGPLTNPAMAQAQLMGVYDPNLTEPLARVLGNLGVKHALVVHGTDGVDEISISAPTVVSEMRDGFVHTYRVVPEDVGLSRAPREYIRGGTKEENARITESVLSGEPGPRRDVVLLNAAAALLAADRVRTLREGVELAAQSIDSGEARRVLERMREFTHRLRAESA</sequence>
<evidence type="ECO:0000255" key="1">
    <source>
        <dbReference type="HAMAP-Rule" id="MF_00211"/>
    </source>
</evidence>